<protein>
    <recommendedName>
        <fullName evidence="5">MFS-type efflux pump MFS1</fullName>
    </recommendedName>
</protein>
<sequence>MTEKGADGADGLTKAKSNAVSEDYETVNHVTGLKLAVIVTGLCLSVLLVALDNTIIATAIPKITDQFHALEDIGWYGSSYLLTICAFQLIFGKIYTFFPVKWVFLIAITIFEIGSAICGAAPNSTALIIGRAVAGIGSAGIFSGALIIIAYSIPLEKRPAYTGAIGGMYGIASVAGPLMGGAFTDHISWRWCFYINLPIGAVTILSILIFLKHPKQKLDNNQTWKARLLKLDPIGTAFFMPSIICLLLALQWGGTKYPWNNGRIIALFVVFAVLISGFIYFQIRGGDSATVPPRILKKRSIASGAFFLFTIGSAFFIMVYYLPIWFQAIKGASATSSGIMNIPMVLSLVVLSIASGITVTAIGYYAPLYYVSTVLTSIGAGLLTTFTTETSKGKWIGYQIIFGAGVGTGLQLSIIAAQAVLPLEDVAVGTVIMMFCQTLGGALFVSVGQNVFTNLLVKGVVNAAPGLDPQVVLRVGATQLKNMIPPQFLDGVQVAYNDALTKTWYVATALAALSVIGSVGMEWKSVKGKKIEPAAA</sequence>
<organism>
    <name type="scientific">Trichophyton rubrum (strain ATCC MYA-4607 / CBS 118892)</name>
    <name type="common">Athlete's foot fungus</name>
    <dbReference type="NCBI Taxonomy" id="559305"/>
    <lineage>
        <taxon>Eukaryota</taxon>
        <taxon>Fungi</taxon>
        <taxon>Dikarya</taxon>
        <taxon>Ascomycota</taxon>
        <taxon>Pezizomycotina</taxon>
        <taxon>Eurotiomycetes</taxon>
        <taxon>Eurotiomycetidae</taxon>
        <taxon>Onygenales</taxon>
        <taxon>Arthrodermataceae</taxon>
        <taxon>Trichophyton</taxon>
    </lineage>
</organism>
<keyword id="KW-1003">Cell membrane</keyword>
<keyword id="KW-0325">Glycoprotein</keyword>
<keyword id="KW-0472">Membrane</keyword>
<keyword id="KW-1185">Reference proteome</keyword>
<keyword id="KW-0812">Transmembrane</keyword>
<keyword id="KW-1133">Transmembrane helix</keyword>
<keyword id="KW-0813">Transport</keyword>
<feature type="chain" id="PRO_0000448446" description="MFS-type efflux pump MFS1">
    <location>
        <begin position="1"/>
        <end position="536"/>
    </location>
</feature>
<feature type="transmembrane region" description="Helical" evidence="1">
    <location>
        <begin position="30"/>
        <end position="50"/>
    </location>
</feature>
<feature type="transmembrane region" description="Helical" evidence="1">
    <location>
        <begin position="80"/>
        <end position="100"/>
    </location>
</feature>
<feature type="transmembrane region" description="Helical" evidence="1">
    <location>
        <begin position="102"/>
        <end position="122"/>
    </location>
</feature>
<feature type="transmembrane region" description="Helical" evidence="1">
    <location>
        <begin position="133"/>
        <end position="153"/>
    </location>
</feature>
<feature type="transmembrane region" description="Helical" evidence="1">
    <location>
        <begin position="163"/>
        <end position="183"/>
    </location>
</feature>
<feature type="transmembrane region" description="Helical" evidence="1">
    <location>
        <begin position="191"/>
        <end position="211"/>
    </location>
</feature>
<feature type="transmembrane region" description="Helical" evidence="1">
    <location>
        <begin position="234"/>
        <end position="254"/>
    </location>
</feature>
<feature type="transmembrane region" description="Helical" evidence="1">
    <location>
        <begin position="264"/>
        <end position="284"/>
    </location>
</feature>
<feature type="transmembrane region" description="Helical" evidence="1">
    <location>
        <begin position="306"/>
        <end position="326"/>
    </location>
</feature>
<feature type="transmembrane region" description="Helical" evidence="1">
    <location>
        <begin position="342"/>
        <end position="362"/>
    </location>
</feature>
<feature type="transmembrane region" description="Helical" evidence="1">
    <location>
        <begin position="366"/>
        <end position="386"/>
    </location>
</feature>
<feature type="transmembrane region" description="Helical" evidence="1">
    <location>
        <begin position="400"/>
        <end position="420"/>
    </location>
</feature>
<feature type="transmembrane region" description="Helical" evidence="1">
    <location>
        <begin position="426"/>
        <end position="446"/>
    </location>
</feature>
<feature type="transmembrane region" description="Helical" evidence="1">
    <location>
        <begin position="503"/>
        <end position="523"/>
    </location>
</feature>
<feature type="glycosylation site" description="N-linked (GlcNAc...) asparagine" evidence="2">
    <location>
        <position position="123"/>
    </location>
</feature>
<feature type="glycosylation site" description="N-linked (GlcNAc...) asparagine" evidence="2">
    <location>
        <position position="221"/>
    </location>
</feature>
<comment type="function">
    <text evidence="3 4">MFS-type efflux pump involved in the modulation susceptibility to azoles, including fluconazole, itraconazole, ketoconazole, miconazole and voriconazole (PubMed:31501141). Confers also increased resistance chloramphenicol and thiamphenicol, suggesting that it acts as a pleiotropic drug transporter with a broad substrate spectrum (Ref.3). Finally, increases the tolerance to cycloheximide when expressed in S.cerevisiae, but not in dermatophyte species (PubMed:31501141, Ref.3).</text>
</comment>
<comment type="subcellular location">
    <subcellularLocation>
        <location evidence="7">Cell membrane</location>
        <topology evidence="1">Multi-pass membrane protein</topology>
    </subcellularLocation>
</comment>
<comment type="induction">
    <text evidence="3">Is slightly over-expressed in strain TIMM20092, an azole-resistant strain isolated in Switzerland.</text>
</comment>
<comment type="similarity">
    <text evidence="6">Belongs to the major facilitator superfamily. TCR/Tet family.</text>
</comment>
<comment type="sequence caution" evidence="6">
    <conflict type="erroneous initiation">
        <sequence resource="EMBL-CDS" id="EGD85348"/>
    </conflict>
    <text>Extended N-terminus.</text>
</comment>
<gene>
    <name evidence="5" type="primary">MFS1</name>
    <name type="ORF">TERG_01623</name>
</gene>
<dbReference type="EMBL" id="GG700649">
    <property type="protein sequence ID" value="EGD85348.1"/>
    <property type="status" value="ALT_INIT"/>
    <property type="molecule type" value="Genomic_DNA"/>
</dbReference>
<dbReference type="RefSeq" id="XP_003236897.1">
    <property type="nucleotide sequence ID" value="XM_003236849.1"/>
</dbReference>
<dbReference type="SMR" id="F2SH39"/>
<dbReference type="FunCoup" id="F2SH39">
    <property type="interactions" value="47"/>
</dbReference>
<dbReference type="STRING" id="559305.F2SH39"/>
<dbReference type="GlyCosmos" id="F2SH39">
    <property type="glycosylation" value="2 sites, No reported glycans"/>
</dbReference>
<dbReference type="GeneID" id="10373353"/>
<dbReference type="eggNOG" id="KOG0254">
    <property type="taxonomic scope" value="Eukaryota"/>
</dbReference>
<dbReference type="HOGENOM" id="CLU_000960_22_1_1"/>
<dbReference type="InParanoid" id="F2SH39"/>
<dbReference type="OrthoDB" id="10021397at2759"/>
<dbReference type="Proteomes" id="UP000008864">
    <property type="component" value="Unassembled WGS sequence"/>
</dbReference>
<dbReference type="GO" id="GO:0005886">
    <property type="term" value="C:plasma membrane"/>
    <property type="evidence" value="ECO:0007669"/>
    <property type="project" value="UniProtKB-SubCell"/>
</dbReference>
<dbReference type="GO" id="GO:0022857">
    <property type="term" value="F:transmembrane transporter activity"/>
    <property type="evidence" value="ECO:0007669"/>
    <property type="project" value="InterPro"/>
</dbReference>
<dbReference type="CDD" id="cd17502">
    <property type="entry name" value="MFS_Azr1_MDR_like"/>
    <property type="match status" value="1"/>
</dbReference>
<dbReference type="FunFam" id="1.20.1250.20:FF:000489">
    <property type="entry name" value="MFS general substrate transporter"/>
    <property type="match status" value="1"/>
</dbReference>
<dbReference type="FunFam" id="1.20.1250.20:FF:000196">
    <property type="entry name" value="MFS toxin efflux pump (AflT)"/>
    <property type="match status" value="1"/>
</dbReference>
<dbReference type="FunFam" id="1.20.1720.10:FF:000012">
    <property type="entry name" value="MFS toxin efflux pump (AflT)"/>
    <property type="match status" value="1"/>
</dbReference>
<dbReference type="Gene3D" id="1.20.1250.20">
    <property type="entry name" value="MFS general substrate transporter like domains"/>
    <property type="match status" value="1"/>
</dbReference>
<dbReference type="Gene3D" id="1.20.1720.10">
    <property type="entry name" value="Multidrug resistance protein D"/>
    <property type="match status" value="1"/>
</dbReference>
<dbReference type="InterPro" id="IPR011701">
    <property type="entry name" value="MFS"/>
</dbReference>
<dbReference type="InterPro" id="IPR020846">
    <property type="entry name" value="MFS_dom"/>
</dbReference>
<dbReference type="InterPro" id="IPR036259">
    <property type="entry name" value="MFS_trans_sf"/>
</dbReference>
<dbReference type="PANTHER" id="PTHR23501">
    <property type="entry name" value="MAJOR FACILITATOR SUPERFAMILY"/>
    <property type="match status" value="1"/>
</dbReference>
<dbReference type="PANTHER" id="PTHR23501:SF199">
    <property type="entry name" value="MFS EFFLUX TRANSPORTER INPD-RELATED"/>
    <property type="match status" value="1"/>
</dbReference>
<dbReference type="Pfam" id="PF07690">
    <property type="entry name" value="MFS_1"/>
    <property type="match status" value="1"/>
</dbReference>
<dbReference type="SUPFAM" id="SSF103473">
    <property type="entry name" value="MFS general substrate transporter"/>
    <property type="match status" value="1"/>
</dbReference>
<dbReference type="PROSITE" id="PS50850">
    <property type="entry name" value="MFS"/>
    <property type="match status" value="1"/>
</dbReference>
<reference key="1">
    <citation type="journal article" date="2012" name="MBio">
        <title>Comparative genome analysis of Trichophyton rubrum and related dermatophytes reveals candidate genes involved in infection.</title>
        <authorList>
            <person name="Martinez D.A."/>
            <person name="Oliver B.G."/>
            <person name="Graeser Y."/>
            <person name="Goldberg J.M."/>
            <person name="Li W."/>
            <person name="Martinez-Rossi N.M."/>
            <person name="Monod M."/>
            <person name="Shelest E."/>
            <person name="Barton R.C."/>
            <person name="Birch E."/>
            <person name="Brakhage A.A."/>
            <person name="Chen Z."/>
            <person name="Gurr S.J."/>
            <person name="Heiman D."/>
            <person name="Heitman J."/>
            <person name="Kosti I."/>
            <person name="Rossi A."/>
            <person name="Saif S."/>
            <person name="Samalova M."/>
            <person name="Saunders C.W."/>
            <person name="Shea T."/>
            <person name="Summerbell R.C."/>
            <person name="Xu J."/>
            <person name="Young S."/>
            <person name="Zeng Q."/>
            <person name="Birren B.W."/>
            <person name="Cuomo C.A."/>
            <person name="White T.C."/>
        </authorList>
    </citation>
    <scope>NUCLEOTIDE SEQUENCE [LARGE SCALE GENOMIC DNA]</scope>
    <source>
        <strain>ATCC MYA-4607 / CBS 118892</strain>
    </source>
</reference>
<reference key="2">
    <citation type="journal article" date="2019" name="Antimicrob. Agents Chemother.">
        <title>Trichophyton rubrum azole resistance mediated by a new ABC transporter, TruMDR3.</title>
        <authorList>
            <person name="Monod M."/>
            <person name="Feuermann M."/>
            <person name="Salamin K."/>
            <person name="Fratti M."/>
            <person name="Makino M."/>
            <person name="Alshahni M.M."/>
            <person name="Makimura K."/>
            <person name="Yamada T."/>
        </authorList>
    </citation>
    <scope>IDENTIFICATION</scope>
    <scope>FUNCTION</scope>
    <scope>INDUCTION</scope>
</reference>
<reference key="3">
    <citation type="journal article" date="2021" name="J. Fungi">
        <title>MFS1, a pleiotropic transporter in dermatophytes that plays a key role in their intrinsic resistance to chloramphenicol and fluconazole.</title>
        <authorList>
            <person name="Yamada T."/>
            <person name="Yaguchi T."/>
            <person name="Salamin K."/>
            <person name="Guenova E."/>
            <person name="Feuermann M."/>
            <person name="Monod M."/>
        </authorList>
    </citation>
    <scope>FUNCTION</scope>
</reference>
<accession>F2SH39</accession>
<name>MFS1_TRIRC</name>
<proteinExistence type="evidence at transcript level"/>
<evidence type="ECO:0000255" key="1"/>
<evidence type="ECO:0000255" key="2">
    <source>
        <dbReference type="PROSITE-ProRule" id="PRU00498"/>
    </source>
</evidence>
<evidence type="ECO:0000269" key="3">
    <source>
    </source>
</evidence>
<evidence type="ECO:0000269" key="4">
    <source ref="3"/>
</evidence>
<evidence type="ECO:0000303" key="5">
    <source>
    </source>
</evidence>
<evidence type="ECO:0000305" key="6"/>
<evidence type="ECO:0000305" key="7">
    <source>
    </source>
</evidence>